<comment type="function">
    <text evidence="1">Photosystem II (PSII) is a light-driven water:plastoquinone oxidoreductase that uses light energy to abstract electrons from H(2)O, generating O(2) and a proton gradient subsequently used for ATP formation. It consists of a core antenna complex that captures photons, and an electron transfer chain that converts photonic excitation into a charge separation. The D1/D2 (PsbA/PsbD) reaction center heterodimer binds P680, the primary electron donor of PSII as well as several subsequent electron acceptors.</text>
</comment>
<comment type="catalytic activity">
    <reaction evidence="1">
        <text>2 a plastoquinone + 4 hnu + 2 H2O = 2 a plastoquinol + O2</text>
        <dbReference type="Rhea" id="RHEA:36359"/>
        <dbReference type="Rhea" id="RHEA-COMP:9561"/>
        <dbReference type="Rhea" id="RHEA-COMP:9562"/>
        <dbReference type="ChEBI" id="CHEBI:15377"/>
        <dbReference type="ChEBI" id="CHEBI:15379"/>
        <dbReference type="ChEBI" id="CHEBI:17757"/>
        <dbReference type="ChEBI" id="CHEBI:30212"/>
        <dbReference type="ChEBI" id="CHEBI:62192"/>
        <dbReference type="EC" id="1.10.3.9"/>
    </reaction>
</comment>
<comment type="cofactor">
    <text evidence="1">The D1/D2 heterodimer binds P680, chlorophylls that are the primary electron donor of PSII, and subsequent electron acceptors. It shares a non-heme iron and each subunit binds pheophytin, quinone, additional chlorophylls, carotenoids and lipids. D1 provides most of the ligands for the Mn4-Ca-O5 cluster of the oxygen-evolving complex (OEC). There is also a Cl(-1) ion associated with D1 and D2, which is required for oxygen evolution. The PSII complex binds additional chlorophylls, carotenoids and specific lipids.</text>
</comment>
<comment type="subunit">
    <text evidence="1">PSII is composed of 1 copy each of membrane proteins PsbA, PsbB, PsbC, PsbD, PsbE, PsbF, PsbH, PsbI, PsbJ, PsbK, PsbL, PsbM, PsbT, PsbX, PsbY, PsbZ, Psb30/Ycf12, peripheral proteins PsbO, CyanoQ (PsbQ), PsbU, PsbV and a large number of cofactors. It forms dimeric complexes.</text>
</comment>
<comment type="subcellular location">
    <subcellularLocation>
        <location evidence="1">Cellular thylakoid membrane</location>
        <topology evidence="1">Multi-pass membrane protein</topology>
    </subcellularLocation>
</comment>
<comment type="PTM">
    <text evidence="1">Tyr-164 forms a radical intermediate that is referred to as redox-active TyrZ, YZ or Y-Z.</text>
</comment>
<comment type="miscellaneous">
    <text evidence="1">Cyanobacteria usually contain more than 2 copies of the psbA gene.</text>
</comment>
<comment type="miscellaneous">
    <text evidence="1">2 of the reaction center chlorophylls (ChlD1 and ChlD2) are entirely coordinated by water.</text>
</comment>
<comment type="miscellaneous">
    <text evidence="1">Herbicides such as atrazine, BNT, diuron or ioxynil bind in the Q(B) binding site and block subsequent electron transfer.</text>
</comment>
<comment type="similarity">
    <text evidence="1">Belongs to the reaction center PufL/M/PsbA/D family.</text>
</comment>
<comment type="caution">
    <text evidence="2">This copy of PsbA is missing the site cleaved by CtpA, and thus may not be able to ligate the manganese cluster.</text>
</comment>
<comment type="caution">
    <text evidence="2">This copy of psbA is missing some conserved residues important for binding the Mn4-Ca-O5 cluster.</text>
</comment>
<name>PSBA4_TRIV2</name>
<gene>
    <name evidence="1 2" type="primary">psbA6</name>
    <name type="ordered locus">Ava_4121</name>
</gene>
<feature type="chain" id="PRO_0000316342" description="Photosystem II protein D1 4">
    <location>
        <begin position="1"/>
        <end position="356"/>
    </location>
</feature>
<feature type="transmembrane region" description="Helical" evidence="1">
    <location>
        <begin position="32"/>
        <end position="49"/>
    </location>
</feature>
<feature type="transmembrane region" description="Helical" evidence="1">
    <location>
        <begin position="121"/>
        <end position="136"/>
    </location>
</feature>
<feature type="transmembrane region" description="Helical" evidence="1">
    <location>
        <begin position="145"/>
        <end position="159"/>
    </location>
</feature>
<feature type="transmembrane region" description="Helical" evidence="1">
    <location>
        <begin position="200"/>
        <end position="221"/>
    </location>
</feature>
<feature type="transmembrane region" description="Helical" evidence="1">
    <location>
        <begin position="278"/>
        <end position="292"/>
    </location>
</feature>
<feature type="binding site" description="axial binding residue" evidence="1">
    <location>
        <position position="121"/>
    </location>
    <ligand>
        <name>chlorophyll a</name>
        <dbReference type="ChEBI" id="CHEBI:58416"/>
        <label>ChlzD1</label>
    </ligand>
    <ligandPart>
        <name>Mg</name>
        <dbReference type="ChEBI" id="CHEBI:25107"/>
    </ligandPart>
</feature>
<feature type="binding site" evidence="1">
    <location>
        <position position="173"/>
    </location>
    <ligand>
        <name>[CaMn4O5] cluster</name>
        <dbReference type="ChEBI" id="CHEBI:189552"/>
    </ligand>
</feature>
<feature type="binding site" evidence="1">
    <location>
        <position position="192"/>
    </location>
    <ligand>
        <name>[CaMn4O5] cluster</name>
        <dbReference type="ChEBI" id="CHEBI:189552"/>
    </ligand>
</feature>
<feature type="binding site" description="axial binding residue" evidence="1">
    <location>
        <position position="201"/>
    </location>
    <ligand>
        <name>chlorophyll a</name>
        <dbReference type="ChEBI" id="CHEBI:58416"/>
        <label>PD1</label>
    </ligand>
    <ligandPart>
        <name>Mg</name>
        <dbReference type="ChEBI" id="CHEBI:25107"/>
    </ligandPart>
</feature>
<feature type="binding site" evidence="1">
    <location>
        <position position="218"/>
    </location>
    <ligand>
        <name>a quinone</name>
        <dbReference type="ChEBI" id="CHEBI:132124"/>
        <label>B</label>
    </ligand>
</feature>
<feature type="binding site" evidence="1">
    <location>
        <position position="218"/>
    </location>
    <ligand>
        <name>Fe cation</name>
        <dbReference type="ChEBI" id="CHEBI:24875"/>
        <note>ligand shared with heterodimeric partner</note>
    </ligand>
</feature>
<feature type="binding site" evidence="1">
    <location>
        <position position="276"/>
    </location>
    <ligand>
        <name>Fe cation</name>
        <dbReference type="ChEBI" id="CHEBI:24875"/>
        <note>ligand shared with heterodimeric partner</note>
    </ligand>
</feature>
<feature type="binding site" evidence="1">
    <location>
        <position position="336"/>
    </location>
    <ligand>
        <name>[CaMn4O5] cluster</name>
        <dbReference type="ChEBI" id="CHEBI:189552"/>
    </ligand>
</feature>
<feature type="site" description="Tyrosine radical intermediate" evidence="1">
    <location>
        <position position="164"/>
    </location>
</feature>
<feature type="site" description="Stabilizes free radical intermediate" evidence="1">
    <location>
        <position position="193"/>
    </location>
</feature>
<evidence type="ECO:0000255" key="1">
    <source>
        <dbReference type="HAMAP-Rule" id="MF_01379"/>
    </source>
</evidence>
<evidence type="ECO:0000305" key="2"/>
<reference key="1">
    <citation type="journal article" date="2014" name="Stand. Genomic Sci.">
        <title>Complete genome sequence of Anabaena variabilis ATCC 29413.</title>
        <authorList>
            <person name="Thiel T."/>
            <person name="Pratte B.S."/>
            <person name="Zhong J."/>
            <person name="Goodwin L."/>
            <person name="Copeland A."/>
            <person name="Lucas S."/>
            <person name="Han C."/>
            <person name="Pitluck S."/>
            <person name="Land M.L."/>
            <person name="Kyrpides N.C."/>
            <person name="Woyke T."/>
        </authorList>
    </citation>
    <scope>NUCLEOTIDE SEQUENCE [LARGE SCALE GENOMIC DNA]</scope>
    <source>
        <strain>ATCC 29413 / PCC 7937</strain>
    </source>
</reference>
<dbReference type="EC" id="1.10.3.9" evidence="1"/>
<dbReference type="EMBL" id="CP000117">
    <property type="protein sequence ID" value="ABA23720.1"/>
    <property type="molecule type" value="Genomic_DNA"/>
</dbReference>
<dbReference type="SMR" id="Q3M5L6"/>
<dbReference type="STRING" id="240292.Ava_4121"/>
<dbReference type="KEGG" id="ava:Ava_4121"/>
<dbReference type="eggNOG" id="ENOG502Z87P">
    <property type="taxonomic scope" value="Bacteria"/>
</dbReference>
<dbReference type="HOGENOM" id="CLU_054206_1_0_3"/>
<dbReference type="Proteomes" id="UP000002533">
    <property type="component" value="Chromosome"/>
</dbReference>
<dbReference type="GO" id="GO:0009523">
    <property type="term" value="C:photosystem II"/>
    <property type="evidence" value="ECO:0007669"/>
    <property type="project" value="UniProtKB-KW"/>
</dbReference>
<dbReference type="GO" id="GO:0031676">
    <property type="term" value="C:plasma membrane-derived thylakoid membrane"/>
    <property type="evidence" value="ECO:0007669"/>
    <property type="project" value="UniProtKB-SubCell"/>
</dbReference>
<dbReference type="GO" id="GO:0016168">
    <property type="term" value="F:chlorophyll binding"/>
    <property type="evidence" value="ECO:0007669"/>
    <property type="project" value="UniProtKB-UniRule"/>
</dbReference>
<dbReference type="GO" id="GO:0045156">
    <property type="term" value="F:electron transporter, transferring electrons within the cyclic electron transport pathway of photosynthesis activity"/>
    <property type="evidence" value="ECO:0007669"/>
    <property type="project" value="InterPro"/>
</dbReference>
<dbReference type="GO" id="GO:0005506">
    <property type="term" value="F:iron ion binding"/>
    <property type="evidence" value="ECO:0007669"/>
    <property type="project" value="UniProtKB-UniRule"/>
</dbReference>
<dbReference type="GO" id="GO:0016682">
    <property type="term" value="F:oxidoreductase activity, acting on diphenols and related substances as donors, oxygen as acceptor"/>
    <property type="evidence" value="ECO:0007669"/>
    <property type="project" value="UniProtKB-UniRule"/>
</dbReference>
<dbReference type="GO" id="GO:0010242">
    <property type="term" value="F:oxygen evolving activity"/>
    <property type="evidence" value="ECO:0007669"/>
    <property type="project" value="UniProtKB-EC"/>
</dbReference>
<dbReference type="GO" id="GO:0009772">
    <property type="term" value="P:photosynthetic electron transport in photosystem II"/>
    <property type="evidence" value="ECO:0007669"/>
    <property type="project" value="InterPro"/>
</dbReference>
<dbReference type="GO" id="GO:0009635">
    <property type="term" value="P:response to herbicide"/>
    <property type="evidence" value="ECO:0007669"/>
    <property type="project" value="UniProtKB-KW"/>
</dbReference>
<dbReference type="FunFam" id="1.20.85.10:FF:000002">
    <property type="entry name" value="Photosystem II protein D1"/>
    <property type="match status" value="1"/>
</dbReference>
<dbReference type="Gene3D" id="1.20.85.10">
    <property type="entry name" value="Photosystem II protein D1-like"/>
    <property type="match status" value="1"/>
</dbReference>
<dbReference type="HAMAP" id="MF_01379">
    <property type="entry name" value="PSII_PsbA_D1"/>
    <property type="match status" value="1"/>
</dbReference>
<dbReference type="InterPro" id="IPR055266">
    <property type="entry name" value="D1/D2"/>
</dbReference>
<dbReference type="InterPro" id="IPR036854">
    <property type="entry name" value="Photo_II_D1/D2_sf"/>
</dbReference>
<dbReference type="InterPro" id="IPR000484">
    <property type="entry name" value="Photo_RC_L/M"/>
</dbReference>
<dbReference type="InterPro" id="IPR055265">
    <property type="entry name" value="Photo_RC_L/M_CS"/>
</dbReference>
<dbReference type="InterPro" id="IPR005867">
    <property type="entry name" value="PSII_D1"/>
</dbReference>
<dbReference type="PANTHER" id="PTHR33149:SF12">
    <property type="entry name" value="PHOTOSYSTEM II D2 PROTEIN"/>
    <property type="match status" value="1"/>
</dbReference>
<dbReference type="PANTHER" id="PTHR33149">
    <property type="entry name" value="PHOTOSYSTEM II PROTEIN D1"/>
    <property type="match status" value="1"/>
</dbReference>
<dbReference type="Pfam" id="PF00124">
    <property type="entry name" value="Photo_RC"/>
    <property type="match status" value="1"/>
</dbReference>
<dbReference type="PRINTS" id="PR00256">
    <property type="entry name" value="REACTNCENTRE"/>
</dbReference>
<dbReference type="SUPFAM" id="SSF81483">
    <property type="entry name" value="Bacterial photosystem II reaction centre, L and M subunits"/>
    <property type="match status" value="1"/>
</dbReference>
<dbReference type="PROSITE" id="PS00244">
    <property type="entry name" value="REACTION_CENTER"/>
    <property type="match status" value="1"/>
</dbReference>
<organism>
    <name type="scientific">Trichormus variabilis (strain ATCC 29413 / PCC 7937)</name>
    <name type="common">Anabaena variabilis</name>
    <dbReference type="NCBI Taxonomy" id="240292"/>
    <lineage>
        <taxon>Bacteria</taxon>
        <taxon>Bacillati</taxon>
        <taxon>Cyanobacteriota</taxon>
        <taxon>Cyanophyceae</taxon>
        <taxon>Nostocales</taxon>
        <taxon>Nostocaceae</taxon>
        <taxon>Trichormus</taxon>
    </lineage>
</organism>
<accession>Q3M5L6</accession>
<keyword id="KW-0106">Calcium</keyword>
<keyword id="KW-0148">Chlorophyll</keyword>
<keyword id="KW-0157">Chromophore</keyword>
<keyword id="KW-0249">Electron transport</keyword>
<keyword id="KW-0359">Herbicide resistance</keyword>
<keyword id="KW-0408">Iron</keyword>
<keyword id="KW-0460">Magnesium</keyword>
<keyword id="KW-0464">Manganese</keyword>
<keyword id="KW-0472">Membrane</keyword>
<keyword id="KW-0479">Metal-binding</keyword>
<keyword id="KW-0560">Oxidoreductase</keyword>
<keyword id="KW-0602">Photosynthesis</keyword>
<keyword id="KW-0604">Photosystem II</keyword>
<keyword id="KW-0793">Thylakoid</keyword>
<keyword id="KW-0812">Transmembrane</keyword>
<keyword id="KW-1133">Transmembrane helix</keyword>
<keyword id="KW-0813">Transport</keyword>
<protein>
    <recommendedName>
        <fullName evidence="1">Photosystem II protein D1 4</fullName>
        <shortName evidence="1">PSII D1 protein 4</shortName>
        <ecNumber evidence="1">1.10.3.9</ecNumber>
    </recommendedName>
    <alternativeName>
        <fullName evidence="1">Photosystem II Q(B) protein 4</fullName>
    </alternativeName>
</protein>
<proteinExistence type="inferred from homology"/>
<sequence>MSTIVQRQKEFNFFDLWDSFCAWITSTENRIYIGWFGVLSIPTLLAATTCFVLAFIAAPSVDMDGIREPIMGSLMDGNNLITAAVVPTSAAIGLHFYPIWEAASMDEWLYNGGPYQLIVLHFLIGIWCLLGRFWELSYRLGMRPWIAVAYSAPVIAATSVLLVYPIGQGSFSDGLPLGIAGTFHFMLAFQGDHNILMHPFHMLGVAGVFGGALLSSLHGSLVASTLIRNTDENESINGGYKLGQQQVTYKYLAGHNSFLGRLLIPTFASRNHRAFHFLLAALPTIGIWFAAMGVCSMAFNLNGLNFNHSILDSRGNVIRSDADILNRANIGLSVMHAPNVHNFPLVLSSGQPIPVS</sequence>